<gene>
    <name type="primary">xylA</name>
</gene>
<reference key="1">
    <citation type="journal article" date="1991" name="J. Bacteriol.">
        <title>Xylose (glucose) isomerase gene from the thermophile Thermus thermophilus: cloning, sequencing, and comparison with other thermostable xylose isomerases.</title>
        <authorList>
            <person name="Dekker K."/>
            <person name="Yamagata H."/>
            <person name="Sakaguchi K."/>
            <person name="Udaka S."/>
        </authorList>
    </citation>
    <scope>NUCLEOTIDE SEQUENCE [GENOMIC DNA]</scope>
</reference>
<reference key="2">
    <citation type="journal article" date="1999" name="J. Mol. Biol.">
        <title>Crystal structures of thermostable xylose isomerases from Thermus caldophilus and Thermus thermophilus: possible structural determinants of thermostability.</title>
        <authorList>
            <person name="Chang C."/>
            <person name="Park B.C."/>
            <person name="Lee D.-S."/>
            <person name="Suh S.W."/>
        </authorList>
    </citation>
    <scope>X-RAY CRYSTALLOGRAPHY (2.2 ANGSTROMS)</scope>
</reference>
<proteinExistence type="evidence at protein level"/>
<dbReference type="EC" id="5.3.1.5"/>
<dbReference type="EMBL" id="D90256">
    <property type="protein sequence ID" value="BAA14301.1"/>
    <property type="molecule type" value="Genomic_DNA"/>
</dbReference>
<dbReference type="RefSeq" id="WP_014677651.1">
    <property type="nucleotide sequence ID" value="NC_017767.1"/>
</dbReference>
<dbReference type="RefSeq" id="YP_006250271.1">
    <property type="nucleotide sequence ID" value="NC_017767.1"/>
</dbReference>
<dbReference type="PDB" id="1BXB">
    <property type="method" value="X-ray"/>
    <property type="resolution" value="2.20 A"/>
    <property type="chains" value="A/B/C/D=1-387"/>
</dbReference>
<dbReference type="PDBsum" id="1BXB"/>
<dbReference type="SMR" id="P26997"/>
<dbReference type="BRENDA" id="5.3.1.5">
    <property type="organism ID" value="2305"/>
</dbReference>
<dbReference type="SABIO-RK" id="P26997"/>
<dbReference type="EvolutionaryTrace" id="P26997"/>
<dbReference type="GO" id="GO:0005737">
    <property type="term" value="C:cytoplasm"/>
    <property type="evidence" value="ECO:0007669"/>
    <property type="project" value="UniProtKB-SubCell"/>
</dbReference>
<dbReference type="GO" id="GO:0000287">
    <property type="term" value="F:magnesium ion binding"/>
    <property type="evidence" value="ECO:0007669"/>
    <property type="project" value="UniProtKB-UniRule"/>
</dbReference>
<dbReference type="GO" id="GO:0009045">
    <property type="term" value="F:xylose isomerase activity"/>
    <property type="evidence" value="ECO:0007669"/>
    <property type="project" value="UniProtKB-UniRule"/>
</dbReference>
<dbReference type="GO" id="GO:0042732">
    <property type="term" value="P:D-xylose metabolic process"/>
    <property type="evidence" value="ECO:0007669"/>
    <property type="project" value="UniProtKB-UniRule"/>
</dbReference>
<dbReference type="Gene3D" id="3.20.20.150">
    <property type="entry name" value="Divalent-metal-dependent TIM barrel enzymes"/>
    <property type="match status" value="1"/>
</dbReference>
<dbReference type="HAMAP" id="MF_00455">
    <property type="entry name" value="Xylose_isom_A"/>
    <property type="match status" value="1"/>
</dbReference>
<dbReference type="InterPro" id="IPR036237">
    <property type="entry name" value="Xyl_isomerase-like_sf"/>
</dbReference>
<dbReference type="InterPro" id="IPR013022">
    <property type="entry name" value="Xyl_isomerase-like_TIM-brl"/>
</dbReference>
<dbReference type="InterPro" id="IPR013453">
    <property type="entry name" value="XylA_actinobac"/>
</dbReference>
<dbReference type="InterPro" id="IPR001998">
    <property type="entry name" value="Xylose_isomerase"/>
</dbReference>
<dbReference type="NCBIfam" id="TIGR02631">
    <property type="entry name" value="xylA_Arthro"/>
    <property type="match status" value="1"/>
</dbReference>
<dbReference type="PANTHER" id="PTHR48408">
    <property type="match status" value="1"/>
</dbReference>
<dbReference type="PANTHER" id="PTHR48408:SF1">
    <property type="entry name" value="XYLOSE ISOMERASE"/>
    <property type="match status" value="1"/>
</dbReference>
<dbReference type="Pfam" id="PF01261">
    <property type="entry name" value="AP_endonuc_2"/>
    <property type="match status" value="1"/>
</dbReference>
<dbReference type="PRINTS" id="PR00688">
    <property type="entry name" value="XYLOSISMRASE"/>
</dbReference>
<dbReference type="SUPFAM" id="SSF51658">
    <property type="entry name" value="Xylose isomerase-like"/>
    <property type="match status" value="1"/>
</dbReference>
<dbReference type="PROSITE" id="PS51415">
    <property type="entry name" value="XYLOSE_ISOMERASE"/>
    <property type="match status" value="1"/>
</dbReference>
<feature type="chain" id="PRO_0000195816" description="Xylose isomerase">
    <location>
        <begin position="1"/>
        <end position="387"/>
    </location>
</feature>
<feature type="active site" evidence="1">
    <location>
        <position position="53"/>
    </location>
</feature>
<feature type="active site" evidence="1">
    <location>
        <position position="56"/>
    </location>
</feature>
<feature type="binding site" evidence="1">
    <location>
        <position position="180"/>
    </location>
    <ligand>
        <name>Mg(2+)</name>
        <dbReference type="ChEBI" id="CHEBI:18420"/>
        <label>1</label>
    </ligand>
</feature>
<feature type="binding site" evidence="1">
    <location>
        <position position="216"/>
    </location>
    <ligand>
        <name>Mg(2+)</name>
        <dbReference type="ChEBI" id="CHEBI:18420"/>
        <label>1</label>
    </ligand>
</feature>
<feature type="binding site" evidence="1">
    <location>
        <position position="216"/>
    </location>
    <ligand>
        <name>Mg(2+)</name>
        <dbReference type="ChEBI" id="CHEBI:18420"/>
        <label>2</label>
    </ligand>
</feature>
<feature type="binding site" evidence="1">
    <location>
        <position position="219"/>
    </location>
    <ligand>
        <name>Mg(2+)</name>
        <dbReference type="ChEBI" id="CHEBI:18420"/>
        <label>2</label>
    </ligand>
</feature>
<feature type="binding site" evidence="1">
    <location>
        <position position="244"/>
    </location>
    <ligand>
        <name>Mg(2+)</name>
        <dbReference type="ChEBI" id="CHEBI:18420"/>
        <label>1</label>
    </ligand>
</feature>
<feature type="binding site" evidence="1">
    <location>
        <position position="254"/>
    </location>
    <ligand>
        <name>Mg(2+)</name>
        <dbReference type="ChEBI" id="CHEBI:18420"/>
        <label>2</label>
    </ligand>
</feature>
<feature type="binding site" evidence="1">
    <location>
        <position position="256"/>
    </location>
    <ligand>
        <name>Mg(2+)</name>
        <dbReference type="ChEBI" id="CHEBI:18420"/>
        <label>2</label>
    </ligand>
</feature>
<feature type="binding site" evidence="1">
    <location>
        <position position="286"/>
    </location>
    <ligand>
        <name>Mg(2+)</name>
        <dbReference type="ChEBI" id="CHEBI:18420"/>
        <label>1</label>
    </ligand>
</feature>
<feature type="helix" evidence="3">
    <location>
        <begin position="6"/>
        <end position="8"/>
    </location>
</feature>
<feature type="strand" evidence="3">
    <location>
        <begin position="10"/>
        <end position="13"/>
    </location>
</feature>
<feature type="helix" evidence="3">
    <location>
        <begin position="14"/>
        <end position="17"/>
    </location>
</feature>
<feature type="helix" evidence="3">
    <location>
        <begin position="35"/>
        <end position="45"/>
    </location>
</feature>
<feature type="strand" evidence="3">
    <location>
        <begin position="48"/>
        <end position="53"/>
    </location>
</feature>
<feature type="helix" evidence="3">
    <location>
        <begin position="54"/>
        <end position="57"/>
    </location>
</feature>
<feature type="helix" evidence="3">
    <location>
        <begin position="66"/>
        <end position="81"/>
    </location>
</feature>
<feature type="strand" evidence="3">
    <location>
        <begin position="87"/>
        <end position="89"/>
    </location>
</feature>
<feature type="strand" evidence="3">
    <location>
        <begin position="93"/>
        <end position="95"/>
    </location>
</feature>
<feature type="helix" evidence="3">
    <location>
        <begin position="96"/>
        <end position="100"/>
    </location>
</feature>
<feature type="helix" evidence="3">
    <location>
        <begin position="108"/>
        <end position="128"/>
    </location>
</feature>
<feature type="strand" evidence="3">
    <location>
        <begin position="132"/>
        <end position="135"/>
    </location>
</feature>
<feature type="strand" evidence="3">
    <location>
        <begin position="141"/>
        <end position="143"/>
    </location>
</feature>
<feature type="helix" evidence="3">
    <location>
        <begin position="145"/>
        <end position="147"/>
    </location>
</feature>
<feature type="helix" evidence="3">
    <location>
        <begin position="149"/>
        <end position="151"/>
    </location>
</feature>
<feature type="helix" evidence="3">
    <location>
        <begin position="153"/>
        <end position="171"/>
    </location>
</feature>
<feature type="strand" evidence="3">
    <location>
        <begin position="176"/>
        <end position="179"/>
    </location>
</feature>
<feature type="strand" evidence="3">
    <location>
        <begin position="183"/>
        <end position="192"/>
    </location>
</feature>
<feature type="helix" evidence="3">
    <location>
        <begin position="195"/>
        <end position="202"/>
    </location>
</feature>
<feature type="strand" evidence="3">
    <location>
        <begin position="205"/>
        <end position="207"/>
    </location>
</feature>
<feature type="helix" evidence="3">
    <location>
        <begin position="208"/>
        <end position="210"/>
    </location>
</feature>
<feature type="strand" evidence="3">
    <location>
        <begin position="211"/>
        <end position="213"/>
    </location>
</feature>
<feature type="helix" evidence="3">
    <location>
        <begin position="217"/>
        <end position="222"/>
    </location>
</feature>
<feature type="helix" evidence="3">
    <location>
        <begin position="227"/>
        <end position="236"/>
    </location>
</feature>
<feature type="strand" evidence="3">
    <location>
        <begin position="250"/>
        <end position="253"/>
    </location>
</feature>
<feature type="helix" evidence="3">
    <location>
        <begin position="264"/>
        <end position="276"/>
    </location>
</feature>
<feature type="helix" evidence="3">
    <location>
        <begin position="295"/>
        <end position="320"/>
    </location>
</feature>
<feature type="helix" evidence="3">
    <location>
        <begin position="323"/>
        <end position="332"/>
    </location>
</feature>
<feature type="helix" evidence="3">
    <location>
        <begin position="337"/>
        <end position="340"/>
    </location>
</feature>
<feature type="strand" evidence="3">
    <location>
        <begin position="343"/>
        <end position="345"/>
    </location>
</feature>
<feature type="helix" evidence="3">
    <location>
        <begin position="349"/>
        <end position="356"/>
    </location>
</feature>
<feature type="helix" evidence="3">
    <location>
        <begin position="361"/>
        <end position="366"/>
    </location>
</feature>
<feature type="helix" evidence="3">
    <location>
        <begin position="371"/>
        <end position="382"/>
    </location>
</feature>
<evidence type="ECO:0000250" key="1"/>
<evidence type="ECO:0000305" key="2"/>
<evidence type="ECO:0007829" key="3">
    <source>
        <dbReference type="PDB" id="1BXB"/>
    </source>
</evidence>
<organism>
    <name type="scientific">Thermus thermophilus (strain ATCC 27634 / DSM 579 / HB8)</name>
    <dbReference type="NCBI Taxonomy" id="300852"/>
    <lineage>
        <taxon>Bacteria</taxon>
        <taxon>Thermotogati</taxon>
        <taxon>Deinococcota</taxon>
        <taxon>Deinococci</taxon>
        <taxon>Thermales</taxon>
        <taxon>Thermaceae</taxon>
        <taxon>Thermus</taxon>
    </lineage>
</organism>
<keyword id="KW-0002">3D-structure</keyword>
<keyword id="KW-0119">Carbohydrate metabolism</keyword>
<keyword id="KW-0963">Cytoplasm</keyword>
<keyword id="KW-0413">Isomerase</keyword>
<keyword id="KW-0460">Magnesium</keyword>
<keyword id="KW-0479">Metal-binding</keyword>
<keyword id="KW-0859">Xylose metabolism</keyword>
<accession>P26997</accession>
<sequence length="387" mass="43907">MYEPKPEHRFTFGLWTVGNVGRDPFGDAVRERLDPVYVVHKLAELGAYGVNLHDEDLIPRGTPPQERDQIVRRFKKALDETGLKVPMVTANLFSDPAFKDGAFTSPDPWVRAYALRKSLETMDLGAELGAEIYVVWPGREGAEVEATGKARKVWDWVREALNFMAAYAEDQGYGYRFALEPKPNEPRGDIYFATVGSMLAFIHTLDRPERFGLNPEFAHETMAGLNFVHAVAQALDAGKLFHIDLNDQRMSRFDQDLRFGSENLKAAFFLVDLLESSGYQGPRHFDAHALRTEDEEGVWAFARGCMRTYLILKERAEAFREDPEVKELLAAYYQEDPAALALLGPYSREKAEALKRAELPLEAKRRRGYALERLDQLAVEYLLGVRG</sequence>
<comment type="catalytic activity">
    <reaction>
        <text>alpha-D-xylose = alpha-D-xylulofuranose</text>
        <dbReference type="Rhea" id="RHEA:22816"/>
        <dbReference type="ChEBI" id="CHEBI:28518"/>
        <dbReference type="ChEBI" id="CHEBI:188998"/>
        <dbReference type="EC" id="5.3.1.5"/>
    </reaction>
</comment>
<comment type="cofactor">
    <cofactor evidence="1">
        <name>Mg(2+)</name>
        <dbReference type="ChEBI" id="CHEBI:18420"/>
    </cofactor>
    <text evidence="1">Binds 2 magnesium ions per subunit.</text>
</comment>
<comment type="subunit">
    <text>Homotetramer.</text>
</comment>
<comment type="subcellular location">
    <subcellularLocation>
        <location>Cytoplasm</location>
    </subcellularLocation>
</comment>
<comment type="similarity">
    <text evidence="2">Belongs to the xylose isomerase family.</text>
</comment>
<name>XYLA_THET8</name>
<protein>
    <recommendedName>
        <fullName>Xylose isomerase</fullName>
        <ecNumber>5.3.1.5</ecNumber>
    </recommendedName>
</protein>